<dbReference type="EMBL" id="BC081995">
    <property type="protein sequence ID" value="AAH81995.1"/>
    <property type="molecule type" value="mRNA"/>
</dbReference>
<dbReference type="RefSeq" id="NP_001005882.1">
    <property type="nucleotide sequence ID" value="NM_001005882.1"/>
</dbReference>
<dbReference type="RefSeq" id="XP_006251011.1">
    <property type="nucleotide sequence ID" value="XM_006250949.5"/>
</dbReference>
<dbReference type="RefSeq" id="XP_006251012.1">
    <property type="nucleotide sequence ID" value="XM_006250950.3"/>
</dbReference>
<dbReference type="RefSeq" id="XP_006251013.1">
    <property type="nucleotide sequence ID" value="XM_006250951.4"/>
</dbReference>
<dbReference type="RefSeq" id="XP_006251014.1">
    <property type="nucleotide sequence ID" value="XM_006250952.3"/>
</dbReference>
<dbReference type="RefSeq" id="XP_006251016.1">
    <property type="nucleotide sequence ID" value="XM_006250954.3"/>
</dbReference>
<dbReference type="RefSeq" id="XP_006251017.1">
    <property type="nucleotide sequence ID" value="XM_006250955.2"/>
</dbReference>
<dbReference type="RefSeq" id="XP_008768374.1">
    <property type="nucleotide sequence ID" value="XM_008770152.1"/>
</dbReference>
<dbReference type="RefSeq" id="XP_063129196.1">
    <property type="nucleotide sequence ID" value="XM_063273126.1"/>
</dbReference>
<dbReference type="RefSeq" id="XP_063129197.1">
    <property type="nucleotide sequence ID" value="XM_063273127.1"/>
</dbReference>
<dbReference type="RefSeq" id="XP_063129198.1">
    <property type="nucleotide sequence ID" value="XM_063273128.1"/>
</dbReference>
<dbReference type="RefSeq" id="XP_063129199.1">
    <property type="nucleotide sequence ID" value="XM_063273129.1"/>
</dbReference>
<dbReference type="RefSeq" id="XP_063129200.1">
    <property type="nucleotide sequence ID" value="XM_063273130.1"/>
</dbReference>
<dbReference type="SMR" id="Q66H68"/>
<dbReference type="FunCoup" id="Q66H68">
    <property type="interactions" value="345"/>
</dbReference>
<dbReference type="IntAct" id="Q66H68">
    <property type="interactions" value="3"/>
</dbReference>
<dbReference type="STRING" id="10116.ENSRNOP00000003327"/>
<dbReference type="PhosphoSitePlus" id="Q66H68"/>
<dbReference type="PaxDb" id="10116-ENSRNOP00000003327"/>
<dbReference type="Ensembl" id="ENSRNOT00000003327.7">
    <property type="protein sequence ID" value="ENSRNOP00000003327.5"/>
    <property type="gene ID" value="ENSRNOG00000002408.7"/>
</dbReference>
<dbReference type="GeneID" id="305340"/>
<dbReference type="KEGG" id="rno:305340"/>
<dbReference type="UCSC" id="RGD:1359713">
    <property type="organism name" value="rat"/>
</dbReference>
<dbReference type="AGR" id="RGD:1359713"/>
<dbReference type="CTD" id="54502"/>
<dbReference type="RGD" id="1359713">
    <property type="gene designation" value="Rbm47"/>
</dbReference>
<dbReference type="eggNOG" id="KOG0117">
    <property type="taxonomic scope" value="Eukaryota"/>
</dbReference>
<dbReference type="GeneTree" id="ENSGT00940000156979"/>
<dbReference type="HOGENOM" id="CLU_022960_4_2_1"/>
<dbReference type="InParanoid" id="Q66H68"/>
<dbReference type="OMA" id="VEHMINP"/>
<dbReference type="OrthoDB" id="3800936at2759"/>
<dbReference type="PhylomeDB" id="Q66H68"/>
<dbReference type="TreeFam" id="TF314932"/>
<dbReference type="PRO" id="PR:Q66H68"/>
<dbReference type="Proteomes" id="UP000002494">
    <property type="component" value="Chromosome 14"/>
</dbReference>
<dbReference type="Bgee" id="ENSRNOG00000002408">
    <property type="expression patterns" value="Expressed in jejunum and 15 other cell types or tissues"/>
</dbReference>
<dbReference type="GO" id="GO:0030895">
    <property type="term" value="C:apolipoprotein B mRNA editing enzyme complex"/>
    <property type="evidence" value="ECO:0000266"/>
    <property type="project" value="RGD"/>
</dbReference>
<dbReference type="GO" id="GO:0005737">
    <property type="term" value="C:cytoplasm"/>
    <property type="evidence" value="ECO:0000266"/>
    <property type="project" value="RGD"/>
</dbReference>
<dbReference type="GO" id="GO:0005634">
    <property type="term" value="C:nucleus"/>
    <property type="evidence" value="ECO:0000266"/>
    <property type="project" value="RGD"/>
</dbReference>
<dbReference type="GO" id="GO:0019899">
    <property type="term" value="F:enzyme binding"/>
    <property type="evidence" value="ECO:0000266"/>
    <property type="project" value="RGD"/>
</dbReference>
<dbReference type="GO" id="GO:0140767">
    <property type="term" value="F:enzyme-substrate adaptor activity"/>
    <property type="evidence" value="ECO:0000266"/>
    <property type="project" value="RGD"/>
</dbReference>
<dbReference type="GO" id="GO:0003730">
    <property type="term" value="F:mRNA 3'-UTR binding"/>
    <property type="evidence" value="ECO:0000266"/>
    <property type="project" value="RGD"/>
</dbReference>
<dbReference type="GO" id="GO:0003729">
    <property type="term" value="F:mRNA binding"/>
    <property type="evidence" value="ECO:0000318"/>
    <property type="project" value="GO_Central"/>
</dbReference>
<dbReference type="GO" id="GO:0003723">
    <property type="term" value="F:RNA binding"/>
    <property type="evidence" value="ECO:0000266"/>
    <property type="project" value="RGD"/>
</dbReference>
<dbReference type="GO" id="GO:0070935">
    <property type="term" value="P:3'-UTR-mediated mRNA stabilization"/>
    <property type="evidence" value="ECO:0000266"/>
    <property type="project" value="RGD"/>
</dbReference>
<dbReference type="GO" id="GO:0016554">
    <property type="term" value="P:cytidine to uridine editing"/>
    <property type="evidence" value="ECO:0000266"/>
    <property type="project" value="RGD"/>
</dbReference>
<dbReference type="GO" id="GO:0002244">
    <property type="term" value="P:hematopoietic progenitor cell differentiation"/>
    <property type="evidence" value="ECO:0000266"/>
    <property type="project" value="RGD"/>
</dbReference>
<dbReference type="GO" id="GO:0006397">
    <property type="term" value="P:mRNA processing"/>
    <property type="evidence" value="ECO:0007669"/>
    <property type="project" value="UniProtKB-KW"/>
</dbReference>
<dbReference type="GO" id="GO:0032733">
    <property type="term" value="P:positive regulation of interleukin-10 production"/>
    <property type="evidence" value="ECO:0000266"/>
    <property type="project" value="RGD"/>
</dbReference>
<dbReference type="GO" id="GO:0060340">
    <property type="term" value="P:positive regulation of type I interferon-mediated signaling pathway"/>
    <property type="evidence" value="ECO:0000266"/>
    <property type="project" value="RGD"/>
</dbReference>
<dbReference type="GO" id="GO:0000381">
    <property type="term" value="P:regulation of alternative mRNA splicing, via spliceosome"/>
    <property type="evidence" value="ECO:0000266"/>
    <property type="project" value="RGD"/>
</dbReference>
<dbReference type="GO" id="GO:0008380">
    <property type="term" value="P:RNA splicing"/>
    <property type="evidence" value="ECO:0007669"/>
    <property type="project" value="UniProtKB-KW"/>
</dbReference>
<dbReference type="CDD" id="cd12485">
    <property type="entry name" value="RRM1_RBM47"/>
    <property type="match status" value="1"/>
</dbReference>
<dbReference type="CDD" id="cd12491">
    <property type="entry name" value="RRM2_RBM47"/>
    <property type="match status" value="1"/>
</dbReference>
<dbReference type="CDD" id="cd12497">
    <property type="entry name" value="RRM3_RBM47"/>
    <property type="match status" value="1"/>
</dbReference>
<dbReference type="FunFam" id="3.30.70.330:FF:000022">
    <property type="entry name" value="APOBEC1 complementation factor isoform X1"/>
    <property type="match status" value="1"/>
</dbReference>
<dbReference type="FunFam" id="3.30.70.330:FF:000026">
    <property type="entry name" value="APOBEC1 complementation factor isoform X1"/>
    <property type="match status" value="1"/>
</dbReference>
<dbReference type="FunFam" id="3.30.70.330:FF:000146">
    <property type="entry name" value="RNA-binding protein 47 isoform X1"/>
    <property type="match status" value="1"/>
</dbReference>
<dbReference type="Gene3D" id="3.30.70.330">
    <property type="match status" value="3"/>
</dbReference>
<dbReference type="InterPro" id="IPR006535">
    <property type="entry name" value="HnRNP_R/Q_splicing_fac"/>
</dbReference>
<dbReference type="InterPro" id="IPR012677">
    <property type="entry name" value="Nucleotide-bd_a/b_plait_sf"/>
</dbReference>
<dbReference type="InterPro" id="IPR035979">
    <property type="entry name" value="RBD_domain_sf"/>
</dbReference>
<dbReference type="InterPro" id="IPR047044">
    <property type="entry name" value="RBM47_RRM1"/>
</dbReference>
<dbReference type="InterPro" id="IPR034440">
    <property type="entry name" value="RBM47_RRM2"/>
</dbReference>
<dbReference type="InterPro" id="IPR034445">
    <property type="entry name" value="RBM47_RRM3"/>
</dbReference>
<dbReference type="InterPro" id="IPR000504">
    <property type="entry name" value="RRM_dom"/>
</dbReference>
<dbReference type="NCBIfam" id="TIGR01648">
    <property type="entry name" value="hnRNP-R-Q"/>
    <property type="match status" value="1"/>
</dbReference>
<dbReference type="PANTHER" id="PTHR21245">
    <property type="entry name" value="HETEROGENEOUS NUCLEAR RIBONUCLEOPROTEIN"/>
    <property type="match status" value="1"/>
</dbReference>
<dbReference type="Pfam" id="PF00076">
    <property type="entry name" value="RRM_1"/>
    <property type="match status" value="3"/>
</dbReference>
<dbReference type="SMART" id="SM00360">
    <property type="entry name" value="RRM"/>
    <property type="match status" value="3"/>
</dbReference>
<dbReference type="SUPFAM" id="SSF54928">
    <property type="entry name" value="RNA-binding domain, RBD"/>
    <property type="match status" value="2"/>
</dbReference>
<dbReference type="PROSITE" id="PS50102">
    <property type="entry name" value="RRM"/>
    <property type="match status" value="3"/>
</dbReference>
<sequence>MTAEDSTTAMNSDPTVGSSTKVPEGVAGAPNEAALLALMERTGYNMVQENGQRKYGGPPPGWEGPHPQRGCEVFVGKIPRDVYEDELVPVFETVGRIYELRLMMDFDGKNRGYAFVMYCHKHEAKRAVRELNNYEIRPGRLLGVCCSVDNCRLFIGGIPKMKKRGEILEEIAKVTEGVLNVIVYASAADKMKNRGFAFVEYESHRAAAMARRKLMPGRIQLWGHQIAVDWAEPEIDVDEDVMQTVKILYVRNLMIETTEETIKRSFGQFNPGCVERVKKIRDYAFVHFTSREDAVHAMNNLNGTELEGSCLEVTLAKPVDKEQYSRYQKAAKGGGGSAEAVAQQPSYVYSCDPYTLAYYGYPYNALIGPNRDYFVKTGSIRGRGRGAAGNRTPGPRGSYLGGYSAGRGIYSRYHEGKGKQQEKGYELVPNLEISAVNPVAIKPGTVAIPAIGAQYSMFQAAPAPKIIEDGKIHTMEHMISPIAVQPDPATAAAAAAAAAAAAVIPAVSTPPPFQGRPITPVYTVAPNVPRIPTAGIYGASYVPFAAPATATIATLQKNAAAAVYGGYAGYIPQAFPAALQVPIHDVYQTY</sequence>
<organism>
    <name type="scientific">Rattus norvegicus</name>
    <name type="common">Rat</name>
    <dbReference type="NCBI Taxonomy" id="10116"/>
    <lineage>
        <taxon>Eukaryota</taxon>
        <taxon>Metazoa</taxon>
        <taxon>Chordata</taxon>
        <taxon>Craniata</taxon>
        <taxon>Vertebrata</taxon>
        <taxon>Euteleostomi</taxon>
        <taxon>Mammalia</taxon>
        <taxon>Eutheria</taxon>
        <taxon>Euarchontoglires</taxon>
        <taxon>Glires</taxon>
        <taxon>Rodentia</taxon>
        <taxon>Myomorpha</taxon>
        <taxon>Muroidea</taxon>
        <taxon>Muridae</taxon>
        <taxon>Murinae</taxon>
        <taxon>Rattus</taxon>
    </lineage>
</organism>
<feature type="chain" id="PRO_0000307858" description="RNA-binding protein 47">
    <location>
        <begin position="1"/>
        <end position="590"/>
    </location>
</feature>
<feature type="domain" description="RRM 1" evidence="4">
    <location>
        <begin position="71"/>
        <end position="149"/>
    </location>
</feature>
<feature type="domain" description="RRM 2" evidence="4">
    <location>
        <begin position="151"/>
        <end position="233"/>
    </location>
</feature>
<feature type="domain" description="RRM 3" evidence="4">
    <location>
        <begin position="246"/>
        <end position="318"/>
    </location>
</feature>
<feature type="region of interest" description="Disordered" evidence="5">
    <location>
        <begin position="1"/>
        <end position="26"/>
    </location>
</feature>
<feature type="compositionally biased region" description="Polar residues" evidence="5">
    <location>
        <begin position="1"/>
        <end position="21"/>
    </location>
</feature>
<feature type="modified residue" description="Asymmetric dimethylarginine; alternate" evidence="2">
    <location>
        <position position="396"/>
    </location>
</feature>
<feature type="modified residue" description="Omega-N-methylarginine; alternate" evidence="2">
    <location>
        <position position="396"/>
    </location>
</feature>
<feature type="modified residue" description="Asymmetric dimethylarginine; alternate" evidence="2">
    <location>
        <position position="407"/>
    </location>
</feature>
<feature type="modified residue" description="Omega-N-methylarginine; alternate" evidence="2">
    <location>
        <position position="407"/>
    </location>
</feature>
<evidence type="ECO:0000250" key="1">
    <source>
        <dbReference type="UniProtKB" id="A0A8M1NHK4"/>
    </source>
</evidence>
<evidence type="ECO:0000250" key="2">
    <source>
        <dbReference type="UniProtKB" id="A0AV96"/>
    </source>
</evidence>
<evidence type="ECO:0000250" key="3">
    <source>
        <dbReference type="UniProtKB" id="Q91WT8"/>
    </source>
</evidence>
<evidence type="ECO:0000255" key="4">
    <source>
        <dbReference type="PROSITE-ProRule" id="PRU00176"/>
    </source>
</evidence>
<evidence type="ECO:0000256" key="5">
    <source>
        <dbReference type="SAM" id="MobiDB-lite"/>
    </source>
</evidence>
<evidence type="ECO:0000305" key="6"/>
<evidence type="ECO:0000312" key="7">
    <source>
        <dbReference type="RGD" id="1359713"/>
    </source>
</evidence>
<accession>Q66H68</accession>
<comment type="function">
    <text evidence="1 2">Single-stranded RNA-binding protein that functions in a variety of RNA processes, including alternative splicing, RNA stabilization, and RNA editing. Functions as an enzyme-substrate adapter for the cytidine deaminase APOBEC1. With APOBEC1 forms an mRNA editing complex involved into cytidine to uridine editing of a variety of mRNA molecules. Through the binding of their 3'UTR, also stabilizes a variety of mRNAs and regulates the expression of genes such as the interferon alpha/beta receptor and interleukin-10. Also involved in the alternative splicing of several genes including TJP1. Binds the pre-mRNA (U)GCAUG consensus sequences in downstream intronic regions of alternative exons regulating their exclusion and inclusion into mRNAs (By similarity). Independently of its RNA-binding activity, could negatively regulate MAVS by promoting its lysosomal degradation (By similarity).</text>
</comment>
<comment type="subunit">
    <text evidence="2">Homodimer. Interacts with A1CF. Interacts with APOBEC1; form an mRNA editing complex. Interacts with RBPMS.</text>
</comment>
<comment type="subcellular location">
    <subcellularLocation>
        <location evidence="2">Nucleus</location>
    </subcellularLocation>
    <subcellularLocation>
        <location evidence="2">Cytoplasm</location>
    </subcellularLocation>
</comment>
<comment type="domain">
    <text evidence="3">The RRM domains are required for mRNA stabilization.</text>
</comment>
<comment type="similarity">
    <text evidence="6">Belongs to the RRM RBM47 family.</text>
</comment>
<name>RBM47_RAT</name>
<proteinExistence type="evidence at transcript level"/>
<protein>
    <recommendedName>
        <fullName evidence="2">RNA-binding protein 47</fullName>
    </recommendedName>
    <alternativeName>
        <fullName evidence="7">RNA-binding motif protein 47</fullName>
    </alternativeName>
</protein>
<reference key="1">
    <citation type="journal article" date="2004" name="Genome Res.">
        <title>The status, quality, and expansion of the NIH full-length cDNA project: the Mammalian Gene Collection (MGC).</title>
        <authorList>
            <consortium name="The MGC Project Team"/>
        </authorList>
    </citation>
    <scope>NUCLEOTIDE SEQUENCE [LARGE SCALE MRNA]</scope>
    <source>
        <tissue>Kidney</tissue>
    </source>
</reference>
<gene>
    <name evidence="7" type="primary">Rbm47</name>
</gene>
<keyword id="KW-0963">Cytoplasm</keyword>
<keyword id="KW-0488">Methylation</keyword>
<keyword id="KW-0507">mRNA processing</keyword>
<keyword id="KW-0508">mRNA splicing</keyword>
<keyword id="KW-0539">Nucleus</keyword>
<keyword id="KW-1185">Reference proteome</keyword>
<keyword id="KW-0677">Repeat</keyword>
<keyword id="KW-0694">RNA-binding</keyword>